<evidence type="ECO:0000255" key="1"/>
<evidence type="ECO:0000256" key="2">
    <source>
        <dbReference type="SAM" id="MobiDB-lite"/>
    </source>
</evidence>
<evidence type="ECO:0000305" key="3">
    <source>
    </source>
</evidence>
<sequence length="284" mass="30002">MNIKGSDNGSFIKGSPENDIIDGGKKNDWIDAGNGDDRIKAGDGQDSITAGPGHDIVWAGKGSDVIHADGGDDLLYSDASYPLYVTDPHRVIPHSGEGDDVLYAGPGSDILVAGDGADVLTGGDDGDAFVFRFHDPMVGTTHCYTSVMDFDTKQDRFVLDAADFGGDRNLFDANFINHSKGFPGEFVDTFYNGAAEGAHGEHVVVITDRGFASAAAAATAIDHEARGDIIVFHDQKTLGQDGETHGATLAYVDSANHAHAFAHVDNLHDMSDLTSLTAENFGFI</sequence>
<reference key="1">
    <citation type="journal article" date="1990" name="EMBO J.">
        <title>The Rhizobium nodulation gene nodO encodes a Ca2(+)-binding protein that is exported without N-terminal cleavage and is homologous to haemolysin and related proteins.</title>
        <authorList>
            <person name="Economou A."/>
            <person name="Hamilton W.D.O."/>
            <person name="Johnston A.W.B."/>
            <person name="Downie J.A."/>
        </authorList>
    </citation>
    <scope>NUCLEOTIDE SEQUENCE [GENOMIC DNA]</scope>
    <scope>PROTEIN SEQUENCE OF 1-8</scope>
    <source>
        <strain>8401</strain>
    </source>
</reference>
<reference key="2">
    <citation type="journal article" date="1989" name="J. Bacteriol.">
        <title>nodO, a new nod gene of the Rhizobium leguminosarum biovar viciae sym plasmid pRL1JI, encodes a secreted protein.</title>
        <authorList>
            <person name="de Maagd R.A."/>
            <person name="Wijfjes A.H.M."/>
            <person name="Spaink H.P."/>
            <person name="Ruiz-Sainz J.E."/>
            <person name="Wijffelman C.A."/>
            <person name="Okker R.J.H."/>
            <person name="Lugtenberg B.J.J."/>
        </authorList>
    </citation>
    <scope>NUCLEOTIDE SEQUENCE [GENOMIC DNA]</scope>
    <scope>PROTEIN SEQUENCE OF 4-18</scope>
</reference>
<dbReference type="EMBL" id="X17285">
    <property type="protein sequence ID" value="CAA35178.1"/>
    <property type="molecule type" value="Genomic_DNA"/>
</dbReference>
<dbReference type="EMBL" id="M29532">
    <property type="protein sequence ID" value="AAA26341.1"/>
    <property type="molecule type" value="Genomic_DNA"/>
</dbReference>
<dbReference type="PIR" id="A43721">
    <property type="entry name" value="A43721"/>
</dbReference>
<dbReference type="PIR" id="S08385">
    <property type="entry name" value="S08385"/>
</dbReference>
<dbReference type="RefSeq" id="WP_011654216.1">
    <property type="nucleotide sequence ID" value="NZ_WIFB01000040.1"/>
</dbReference>
<dbReference type="SMR" id="P15728"/>
<dbReference type="OMA" id="ANHAHAF"/>
<dbReference type="GO" id="GO:0005576">
    <property type="term" value="C:extracellular region"/>
    <property type="evidence" value="ECO:0007669"/>
    <property type="project" value="UniProtKB-SubCell"/>
</dbReference>
<dbReference type="GO" id="GO:0005509">
    <property type="term" value="F:calcium ion binding"/>
    <property type="evidence" value="ECO:0007669"/>
    <property type="project" value="InterPro"/>
</dbReference>
<dbReference type="Gene3D" id="2.150.10.10">
    <property type="entry name" value="Serralysin-like metalloprotease, C-terminal"/>
    <property type="match status" value="2"/>
</dbReference>
<dbReference type="InterPro" id="IPR018511">
    <property type="entry name" value="Hemolysin-typ_Ca-bd_CS"/>
</dbReference>
<dbReference type="InterPro" id="IPR001343">
    <property type="entry name" value="Hemolysn_Ca-bd"/>
</dbReference>
<dbReference type="InterPro" id="IPR050557">
    <property type="entry name" value="RTX_toxin/Mannuronan_C5-epim"/>
</dbReference>
<dbReference type="InterPro" id="IPR011049">
    <property type="entry name" value="Serralysin-like_metalloprot_C"/>
</dbReference>
<dbReference type="PANTHER" id="PTHR38340">
    <property type="entry name" value="S-LAYER PROTEIN"/>
    <property type="match status" value="1"/>
</dbReference>
<dbReference type="PANTHER" id="PTHR38340:SF1">
    <property type="entry name" value="S-LAYER PROTEIN"/>
    <property type="match status" value="1"/>
</dbReference>
<dbReference type="Pfam" id="PF00353">
    <property type="entry name" value="HemolysinCabind"/>
    <property type="match status" value="3"/>
</dbReference>
<dbReference type="PRINTS" id="PR00313">
    <property type="entry name" value="CABNDNGRPT"/>
</dbReference>
<dbReference type="SUPFAM" id="SSF51120">
    <property type="entry name" value="beta-Roll"/>
    <property type="match status" value="1"/>
</dbReference>
<dbReference type="PROSITE" id="PS00330">
    <property type="entry name" value="HEMOLYSIN_CALCIUM"/>
    <property type="match status" value="1"/>
</dbReference>
<protein>
    <recommendedName>
        <fullName>Nodulation protein O</fullName>
    </recommendedName>
</protein>
<keyword id="KW-0106">Calcium</keyword>
<keyword id="KW-0903">Direct protein sequencing</keyword>
<keyword id="KW-0479">Metal-binding</keyword>
<keyword id="KW-0536">Nodulation</keyword>
<keyword id="KW-0614">Plasmid</keyword>
<keyword id="KW-0677">Repeat</keyword>
<keyword id="KW-0964">Secreted</keyword>
<accession>P15728</accession>
<proteinExistence type="evidence at protein level"/>
<organism>
    <name type="scientific">Rhizobium leguminosarum bv. viciae</name>
    <dbReference type="NCBI Taxonomy" id="387"/>
    <lineage>
        <taxon>Bacteria</taxon>
        <taxon>Pseudomonadati</taxon>
        <taxon>Pseudomonadota</taxon>
        <taxon>Alphaproteobacteria</taxon>
        <taxon>Hyphomicrobiales</taxon>
        <taxon>Rhizobiaceae</taxon>
        <taxon>Rhizobium/Agrobacterium group</taxon>
        <taxon>Rhizobium</taxon>
    </lineage>
</organism>
<feature type="chain" id="PRO_0000096911" description="Nodulation protein O">
    <location>
        <begin position="1"/>
        <end position="284"/>
    </location>
</feature>
<feature type="repeat" description="Hemolysin-type calcium-binding 1">
    <location>
        <begin position="13"/>
        <end position="30"/>
    </location>
</feature>
<feature type="repeat" description="Hemolysin-type calcium-binding 2">
    <location>
        <begin position="31"/>
        <end position="48"/>
    </location>
</feature>
<feature type="repeat" description="Hemolysin-type calcium-binding 3">
    <location>
        <begin position="58"/>
        <end position="75"/>
    </location>
</feature>
<feature type="repeat" description="Hemolysin-type calcium-binding 4">
    <location>
        <begin position="94"/>
        <end position="111"/>
    </location>
</feature>
<feature type="repeat" description="Hemolysin-type calcium-binding 5">
    <location>
        <begin position="112"/>
        <end position="129"/>
    </location>
</feature>
<feature type="region of interest" description="Disordered" evidence="2">
    <location>
        <begin position="1"/>
        <end position="27"/>
    </location>
</feature>
<feature type="region of interest" description="Export signal (aspartic acid box)" evidence="1">
    <location>
        <begin position="208"/>
        <end position="222"/>
    </location>
</feature>
<feature type="binding site" evidence="3">
    <location>
        <position position="100"/>
    </location>
    <ligand>
        <name>Ca(2+)</name>
        <dbReference type="ChEBI" id="CHEBI:29108"/>
    </ligand>
</feature>
<feature type="binding site" evidence="3">
    <location>
        <position position="109"/>
    </location>
    <ligand>
        <name>Ca(2+)</name>
        <dbReference type="ChEBI" id="CHEBI:29108"/>
    </ligand>
</feature>
<feature type="binding site" evidence="3">
    <location>
        <position position="118"/>
    </location>
    <ligand>
        <name>Ca(2+)</name>
        <dbReference type="ChEBI" id="CHEBI:29108"/>
    </ligand>
</feature>
<feature type="binding site" evidence="3">
    <location>
        <position position="127"/>
    </location>
    <ligand>
        <name>Ca(2+)</name>
        <dbReference type="ChEBI" id="CHEBI:29108"/>
    </ligand>
</feature>
<name>NODO_RHILV</name>
<geneLocation type="plasmid">
    <name>sym pRL1JI</name>
</geneLocation>
<comment type="function">
    <text>The NodO protein may play a role in nodule development by direct interaction with the root hair cells or some other plant surface in a calcium-dependent manner.</text>
</comment>
<comment type="subcellular location">
    <subcellularLocation>
        <location>Secreted</location>
    </subcellularLocation>
    <text>By a mechanism that does not involve an N-terminal signal peptide.</text>
</comment>
<comment type="induction">
    <text>By naringenin (flavonoid).</text>
</comment>
<gene>
    <name type="primary">nodO</name>
    <name type="synonym">nolR</name>
</gene>